<protein>
    <recommendedName>
        <fullName evidence="1">Probable phosphatase Sfri_3709</fullName>
        <ecNumber evidence="1">3.1.3.-</ecNumber>
    </recommendedName>
</protein>
<sequence>MKFLVDIHAHTIASTHAYSTFHDYLGVAKAKGIKLFAITDHGPDMADAPHFWHFVNMRVLPRIVDGVGVLRGIEANIKNEHGEIDFFGDYLKELDIVLAGFHEPVFPPSTKEAHTTALINSIESGNVDIITHPGNPAYPIDVKRVASAAAKHNVALEINNSSFLTSRKGSTCNCIEIANAVKAAGGLLVMGSDSHVAFSLGEFEKAIEVIETVGFPIERLLNRSPEALLSFLTARGHKSLDEYSALID</sequence>
<name>Y3709_SHEFN</name>
<gene>
    <name type="ordered locus">Sfri_3709</name>
</gene>
<evidence type="ECO:0000255" key="1">
    <source>
        <dbReference type="HAMAP-Rule" id="MF_01561"/>
    </source>
</evidence>
<proteinExistence type="inferred from homology"/>
<comment type="cofactor">
    <cofactor evidence="1">
        <name>Zn(2+)</name>
        <dbReference type="ChEBI" id="CHEBI:29105"/>
    </cofactor>
    <text evidence="1">Binds 3 Zn(2+) ions per subunit.</text>
</comment>
<comment type="similarity">
    <text evidence="1">Belongs to the PHP family.</text>
</comment>
<dbReference type="EC" id="3.1.3.-" evidence="1"/>
<dbReference type="EMBL" id="CP000447">
    <property type="protein sequence ID" value="ABI73536.1"/>
    <property type="molecule type" value="Genomic_DNA"/>
</dbReference>
<dbReference type="RefSeq" id="WP_011639124.1">
    <property type="nucleotide sequence ID" value="NC_008345.1"/>
</dbReference>
<dbReference type="SMR" id="Q07WS8"/>
<dbReference type="STRING" id="318167.Sfri_3709"/>
<dbReference type="KEGG" id="sfr:Sfri_3709"/>
<dbReference type="eggNOG" id="COG1387">
    <property type="taxonomic scope" value="Bacteria"/>
</dbReference>
<dbReference type="HOGENOM" id="CLU_061999_0_1_6"/>
<dbReference type="OrthoDB" id="9808747at2"/>
<dbReference type="Proteomes" id="UP000000684">
    <property type="component" value="Chromosome"/>
</dbReference>
<dbReference type="GO" id="GO:0005829">
    <property type="term" value="C:cytosol"/>
    <property type="evidence" value="ECO:0007669"/>
    <property type="project" value="TreeGrafter"/>
</dbReference>
<dbReference type="GO" id="GO:0016791">
    <property type="term" value="F:phosphatase activity"/>
    <property type="evidence" value="ECO:0007669"/>
    <property type="project" value="UniProtKB-UniRule"/>
</dbReference>
<dbReference type="GO" id="GO:0008270">
    <property type="term" value="F:zinc ion binding"/>
    <property type="evidence" value="ECO:0007669"/>
    <property type="project" value="UniProtKB-UniRule"/>
</dbReference>
<dbReference type="GO" id="GO:0071978">
    <property type="term" value="P:bacterial-type flagellum-dependent swarming motility"/>
    <property type="evidence" value="ECO:0007669"/>
    <property type="project" value="TreeGrafter"/>
</dbReference>
<dbReference type="CDD" id="cd07437">
    <property type="entry name" value="PHP_HisPPase_Ycdx_like"/>
    <property type="match status" value="1"/>
</dbReference>
<dbReference type="FunFam" id="3.20.20.140:FF:000008">
    <property type="entry name" value="Probable phosphatase YcdX"/>
    <property type="match status" value="1"/>
</dbReference>
<dbReference type="Gene3D" id="3.20.20.140">
    <property type="entry name" value="Metal-dependent hydrolases"/>
    <property type="match status" value="1"/>
</dbReference>
<dbReference type="HAMAP" id="MF_01561">
    <property type="entry name" value="YcdX_phosphat"/>
    <property type="match status" value="1"/>
</dbReference>
<dbReference type="InterPro" id="IPR023710">
    <property type="entry name" value="Phosphatase_YcdX_put"/>
</dbReference>
<dbReference type="InterPro" id="IPR004013">
    <property type="entry name" value="PHP_dom"/>
</dbReference>
<dbReference type="InterPro" id="IPR050243">
    <property type="entry name" value="PHP_phosphatase"/>
</dbReference>
<dbReference type="InterPro" id="IPR003141">
    <property type="entry name" value="Pol/His_phosphatase_N"/>
</dbReference>
<dbReference type="InterPro" id="IPR016195">
    <property type="entry name" value="Pol/histidinol_Pase-like"/>
</dbReference>
<dbReference type="NCBIfam" id="NF006702">
    <property type="entry name" value="PRK09248.1"/>
    <property type="match status" value="1"/>
</dbReference>
<dbReference type="PANTHER" id="PTHR36928">
    <property type="entry name" value="PHOSPHATASE YCDX-RELATED"/>
    <property type="match status" value="1"/>
</dbReference>
<dbReference type="PANTHER" id="PTHR36928:SF1">
    <property type="entry name" value="PHOSPHATASE YCDX-RELATED"/>
    <property type="match status" value="1"/>
</dbReference>
<dbReference type="Pfam" id="PF02811">
    <property type="entry name" value="PHP"/>
    <property type="match status" value="1"/>
</dbReference>
<dbReference type="SMART" id="SM00481">
    <property type="entry name" value="POLIIIAc"/>
    <property type="match status" value="1"/>
</dbReference>
<dbReference type="SUPFAM" id="SSF89550">
    <property type="entry name" value="PHP domain-like"/>
    <property type="match status" value="1"/>
</dbReference>
<feature type="chain" id="PRO_1000069027" description="Probable phosphatase Sfri_3709">
    <location>
        <begin position="1"/>
        <end position="248"/>
    </location>
</feature>
<feature type="binding site" evidence="1">
    <location>
        <position position="8"/>
    </location>
    <ligand>
        <name>Zn(2+)</name>
        <dbReference type="ChEBI" id="CHEBI:29105"/>
        <label>1</label>
    </ligand>
</feature>
<feature type="binding site" evidence="1">
    <location>
        <position position="10"/>
    </location>
    <ligand>
        <name>Zn(2+)</name>
        <dbReference type="ChEBI" id="CHEBI:29105"/>
        <label>1</label>
    </ligand>
</feature>
<feature type="binding site" evidence="1">
    <location>
        <position position="16"/>
    </location>
    <ligand>
        <name>Zn(2+)</name>
        <dbReference type="ChEBI" id="CHEBI:29105"/>
        <label>2</label>
    </ligand>
</feature>
<feature type="binding site" evidence="1">
    <location>
        <position position="41"/>
    </location>
    <ligand>
        <name>Zn(2+)</name>
        <dbReference type="ChEBI" id="CHEBI:29105"/>
        <label>2</label>
    </ligand>
</feature>
<feature type="binding site" evidence="1">
    <location>
        <position position="74"/>
    </location>
    <ligand>
        <name>Zn(2+)</name>
        <dbReference type="ChEBI" id="CHEBI:29105"/>
        <label>1</label>
    </ligand>
</feature>
<feature type="binding site" evidence="1">
    <location>
        <position position="74"/>
    </location>
    <ligand>
        <name>Zn(2+)</name>
        <dbReference type="ChEBI" id="CHEBI:29105"/>
        <label>3</label>
    </ligand>
</feature>
<feature type="binding site" evidence="1">
    <location>
        <position position="102"/>
    </location>
    <ligand>
        <name>Zn(2+)</name>
        <dbReference type="ChEBI" id="CHEBI:29105"/>
        <label>3</label>
    </ligand>
</feature>
<feature type="binding site" evidence="1">
    <location>
        <position position="132"/>
    </location>
    <ligand>
        <name>Zn(2+)</name>
        <dbReference type="ChEBI" id="CHEBI:29105"/>
        <label>3</label>
    </ligand>
</feature>
<feature type="binding site" evidence="1">
    <location>
        <position position="193"/>
    </location>
    <ligand>
        <name>Zn(2+)</name>
        <dbReference type="ChEBI" id="CHEBI:29105"/>
        <label>1</label>
    </ligand>
</feature>
<feature type="binding site" evidence="1">
    <location>
        <position position="195"/>
    </location>
    <ligand>
        <name>Zn(2+)</name>
        <dbReference type="ChEBI" id="CHEBI:29105"/>
        <label>2</label>
    </ligand>
</feature>
<reference key="1">
    <citation type="submission" date="2006-08" db="EMBL/GenBank/DDBJ databases">
        <title>Complete sequence of Shewanella frigidimarina NCIMB 400.</title>
        <authorList>
            <consortium name="US DOE Joint Genome Institute"/>
            <person name="Copeland A."/>
            <person name="Lucas S."/>
            <person name="Lapidus A."/>
            <person name="Barry K."/>
            <person name="Detter J.C."/>
            <person name="Glavina del Rio T."/>
            <person name="Hammon N."/>
            <person name="Israni S."/>
            <person name="Dalin E."/>
            <person name="Tice H."/>
            <person name="Pitluck S."/>
            <person name="Fredrickson J.K."/>
            <person name="Kolker E."/>
            <person name="McCuel L.A."/>
            <person name="DiChristina T."/>
            <person name="Nealson K.H."/>
            <person name="Newman D."/>
            <person name="Tiedje J.M."/>
            <person name="Zhou J."/>
            <person name="Romine M.F."/>
            <person name="Culley D.E."/>
            <person name="Serres M."/>
            <person name="Chertkov O."/>
            <person name="Brettin T."/>
            <person name="Bruce D."/>
            <person name="Han C."/>
            <person name="Tapia R."/>
            <person name="Gilna P."/>
            <person name="Schmutz J."/>
            <person name="Larimer F."/>
            <person name="Land M."/>
            <person name="Hauser L."/>
            <person name="Kyrpides N."/>
            <person name="Mikhailova N."/>
            <person name="Richardson P."/>
        </authorList>
    </citation>
    <scope>NUCLEOTIDE SEQUENCE [LARGE SCALE GENOMIC DNA]</scope>
    <source>
        <strain>NCIMB 400</strain>
    </source>
</reference>
<keyword id="KW-0378">Hydrolase</keyword>
<keyword id="KW-0479">Metal-binding</keyword>
<keyword id="KW-1185">Reference proteome</keyword>
<keyword id="KW-0862">Zinc</keyword>
<accession>Q07WS8</accession>
<organism>
    <name type="scientific">Shewanella frigidimarina (strain NCIMB 400)</name>
    <dbReference type="NCBI Taxonomy" id="318167"/>
    <lineage>
        <taxon>Bacteria</taxon>
        <taxon>Pseudomonadati</taxon>
        <taxon>Pseudomonadota</taxon>
        <taxon>Gammaproteobacteria</taxon>
        <taxon>Alteromonadales</taxon>
        <taxon>Shewanellaceae</taxon>
        <taxon>Shewanella</taxon>
    </lineage>
</organism>